<organism>
    <name type="scientific">Chlorobium phaeovibrioides (strain DSM 265 / 1930)</name>
    <name type="common">Prosthecochloris vibrioformis (strain DSM 265)</name>
    <dbReference type="NCBI Taxonomy" id="290318"/>
    <lineage>
        <taxon>Bacteria</taxon>
        <taxon>Pseudomonadati</taxon>
        <taxon>Chlorobiota</taxon>
        <taxon>Chlorobiia</taxon>
        <taxon>Chlorobiales</taxon>
        <taxon>Chlorobiaceae</taxon>
        <taxon>Chlorobium/Pelodictyon group</taxon>
        <taxon>Chlorobium</taxon>
    </lineage>
</organism>
<dbReference type="EMBL" id="CP000607">
    <property type="protein sequence ID" value="ABP37326.1"/>
    <property type="molecule type" value="Genomic_DNA"/>
</dbReference>
<dbReference type="SMR" id="A4SFR7"/>
<dbReference type="STRING" id="290318.Cvib_1314"/>
<dbReference type="KEGG" id="pvi:Cvib_1314"/>
<dbReference type="eggNOG" id="COG1420">
    <property type="taxonomic scope" value="Bacteria"/>
</dbReference>
<dbReference type="HOGENOM" id="CLU_050019_1_0_10"/>
<dbReference type="OrthoDB" id="9783139at2"/>
<dbReference type="GO" id="GO:0003677">
    <property type="term" value="F:DNA binding"/>
    <property type="evidence" value="ECO:0007669"/>
    <property type="project" value="InterPro"/>
</dbReference>
<dbReference type="GO" id="GO:0045892">
    <property type="term" value="P:negative regulation of DNA-templated transcription"/>
    <property type="evidence" value="ECO:0007669"/>
    <property type="project" value="UniProtKB-UniRule"/>
</dbReference>
<dbReference type="Gene3D" id="3.30.450.40">
    <property type="match status" value="1"/>
</dbReference>
<dbReference type="Gene3D" id="3.30.390.60">
    <property type="entry name" value="Heat-inducible transcription repressor hrca homolog, domain 3"/>
    <property type="match status" value="1"/>
</dbReference>
<dbReference type="Gene3D" id="1.10.10.10">
    <property type="entry name" value="Winged helix-like DNA-binding domain superfamily/Winged helix DNA-binding domain"/>
    <property type="match status" value="1"/>
</dbReference>
<dbReference type="HAMAP" id="MF_00081">
    <property type="entry name" value="HrcA"/>
    <property type="match status" value="1"/>
</dbReference>
<dbReference type="InterPro" id="IPR029016">
    <property type="entry name" value="GAF-like_dom_sf"/>
</dbReference>
<dbReference type="InterPro" id="IPR002571">
    <property type="entry name" value="HrcA"/>
</dbReference>
<dbReference type="InterPro" id="IPR021153">
    <property type="entry name" value="HrcA_C"/>
</dbReference>
<dbReference type="InterPro" id="IPR036388">
    <property type="entry name" value="WH-like_DNA-bd_sf"/>
</dbReference>
<dbReference type="InterPro" id="IPR036390">
    <property type="entry name" value="WH_DNA-bd_sf"/>
</dbReference>
<dbReference type="InterPro" id="IPR023120">
    <property type="entry name" value="WHTH_transcript_rep_HrcA_IDD"/>
</dbReference>
<dbReference type="NCBIfam" id="TIGR00331">
    <property type="entry name" value="hrcA"/>
    <property type="match status" value="1"/>
</dbReference>
<dbReference type="PANTHER" id="PTHR34824">
    <property type="entry name" value="HEAT-INDUCIBLE TRANSCRIPTION REPRESSOR HRCA"/>
    <property type="match status" value="1"/>
</dbReference>
<dbReference type="PANTHER" id="PTHR34824:SF1">
    <property type="entry name" value="HEAT-INDUCIBLE TRANSCRIPTION REPRESSOR HRCA"/>
    <property type="match status" value="1"/>
</dbReference>
<dbReference type="Pfam" id="PF01628">
    <property type="entry name" value="HrcA"/>
    <property type="match status" value="1"/>
</dbReference>
<dbReference type="PIRSF" id="PIRSF005485">
    <property type="entry name" value="HrcA"/>
    <property type="match status" value="1"/>
</dbReference>
<dbReference type="SUPFAM" id="SSF55781">
    <property type="entry name" value="GAF domain-like"/>
    <property type="match status" value="1"/>
</dbReference>
<dbReference type="SUPFAM" id="SSF46785">
    <property type="entry name" value="Winged helix' DNA-binding domain"/>
    <property type="match status" value="1"/>
</dbReference>
<comment type="function">
    <text evidence="1">Negative regulator of class I heat shock genes (grpE-dnaK-dnaJ and groELS operons). Prevents heat-shock induction of these operons.</text>
</comment>
<comment type="similarity">
    <text evidence="1">Belongs to the HrcA family.</text>
</comment>
<accession>A4SFR7</accession>
<reference key="1">
    <citation type="submission" date="2007-03" db="EMBL/GenBank/DDBJ databases">
        <title>Complete sequence of Prosthecochloris vibrioformis DSM 265.</title>
        <authorList>
            <consortium name="US DOE Joint Genome Institute"/>
            <person name="Copeland A."/>
            <person name="Lucas S."/>
            <person name="Lapidus A."/>
            <person name="Barry K."/>
            <person name="Detter J.C."/>
            <person name="Glavina del Rio T."/>
            <person name="Hammon N."/>
            <person name="Israni S."/>
            <person name="Pitluck S."/>
            <person name="Schmutz J."/>
            <person name="Larimer F."/>
            <person name="Land M."/>
            <person name="Hauser L."/>
            <person name="Mikhailova N."/>
            <person name="Li T."/>
            <person name="Overmann J."/>
            <person name="Schuster S.C."/>
            <person name="Bryant D.A."/>
            <person name="Richardson P."/>
        </authorList>
    </citation>
    <scope>NUCLEOTIDE SEQUENCE [LARGE SCALE GENOMIC DNA]</scope>
    <source>
        <strain>DSM 265 / 1930</strain>
    </source>
</reference>
<keyword id="KW-0678">Repressor</keyword>
<keyword id="KW-0346">Stress response</keyword>
<keyword id="KW-0804">Transcription</keyword>
<keyword id="KW-0805">Transcription regulation</keyword>
<name>HRCA_CHLPM</name>
<feature type="chain" id="PRO_1000075291" description="Heat-inducible transcription repressor HrcA">
    <location>
        <begin position="1"/>
        <end position="357"/>
    </location>
</feature>
<sequence>MGSRELSLRERQVLGIIIQSYVVTAAPVGSRYIARNYSLGLSDATIRNVMADLEDEGYIHQPHTSAGRIPTDLGYRYYVDLIMKVQRIDEDEKRRMETDYGQIAMEHPGTSRDVLLSAAKVLGCISRQLSVVLSPTLSDAVFERLDMVLLSSTRMMVILSIHSLFVKTIVMELPLEVSRKMIEEVSNVINERLAGLTLSEIRRSIAHRLAGSHGDGALKDLIVRSAGSLFDESPIFERLYISGTEYIVDQPEFKQPERVRELITMIEDKFSVARLVEKSGHMSEALRPSDMDVTISIGSENSTREAEDLTIVSTPYYAGNMVGRLGILGPKRMDYEHAVRVLNYMADSLTATLTDAN</sequence>
<proteinExistence type="inferred from homology"/>
<protein>
    <recommendedName>
        <fullName evidence="1">Heat-inducible transcription repressor HrcA</fullName>
    </recommendedName>
</protein>
<gene>
    <name evidence="1" type="primary">hrcA</name>
    <name type="ordered locus">Cvib_1314</name>
</gene>
<evidence type="ECO:0000255" key="1">
    <source>
        <dbReference type="HAMAP-Rule" id="MF_00081"/>
    </source>
</evidence>